<feature type="transit peptide" description="Mitochondrion" evidence="1">
    <location>
        <begin position="1"/>
        <end position="43"/>
    </location>
</feature>
<feature type="chain" id="PRO_0000007463" description="Elongation factor Tu, mitochondrial">
    <location>
        <begin position="44"/>
        <end position="452"/>
    </location>
</feature>
<feature type="domain" description="tr-type G" evidence="4">
    <location>
        <begin position="55"/>
        <end position="251"/>
    </location>
</feature>
<feature type="region of interest" description="G1" evidence="4">
    <location>
        <begin position="64"/>
        <end position="71"/>
    </location>
</feature>
<feature type="region of interest" description="G2" evidence="4">
    <location>
        <begin position="105"/>
        <end position="109"/>
    </location>
</feature>
<feature type="region of interest" description="G3" evidence="4">
    <location>
        <begin position="126"/>
        <end position="129"/>
    </location>
</feature>
<feature type="region of interest" description="G4" evidence="4">
    <location>
        <begin position="181"/>
        <end position="184"/>
    </location>
</feature>
<feature type="region of interest" description="G5" evidence="4">
    <location>
        <begin position="219"/>
        <end position="221"/>
    </location>
</feature>
<feature type="binding site" evidence="2">
    <location>
        <position position="67"/>
    </location>
    <ligand>
        <name>GTP</name>
        <dbReference type="ChEBI" id="CHEBI:37565"/>
    </ligand>
</feature>
<feature type="binding site" evidence="2">
    <location>
        <position position="69"/>
    </location>
    <ligand>
        <name>GTP</name>
        <dbReference type="ChEBI" id="CHEBI:37565"/>
    </ligand>
</feature>
<feature type="binding site" evidence="2">
    <location>
        <position position="70"/>
    </location>
    <ligand>
        <name>GTP</name>
        <dbReference type="ChEBI" id="CHEBI:37565"/>
    </ligand>
</feature>
<feature type="binding site" evidence="2">
    <location>
        <position position="71"/>
    </location>
    <ligand>
        <name>GTP</name>
        <dbReference type="ChEBI" id="CHEBI:37565"/>
    </ligand>
</feature>
<feature type="binding site" evidence="2">
    <location>
        <position position="71"/>
    </location>
    <ligand>
        <name>Mg(2+)</name>
        <dbReference type="ChEBI" id="CHEBI:18420"/>
    </ligand>
</feature>
<feature type="binding site" evidence="2">
    <location>
        <position position="72"/>
    </location>
    <ligand>
        <name>GTP</name>
        <dbReference type="ChEBI" id="CHEBI:37565"/>
    </ligand>
</feature>
<feature type="binding site" evidence="2">
    <location>
        <position position="181"/>
    </location>
    <ligand>
        <name>GTP</name>
        <dbReference type="ChEBI" id="CHEBI:37565"/>
    </ligand>
</feature>
<feature type="binding site" evidence="2">
    <location>
        <position position="184"/>
    </location>
    <ligand>
        <name>GTP</name>
        <dbReference type="ChEBI" id="CHEBI:37565"/>
    </ligand>
</feature>
<feature type="binding site" evidence="2">
    <location>
        <position position="219"/>
    </location>
    <ligand>
        <name>GTP</name>
        <dbReference type="ChEBI" id="CHEBI:37565"/>
    </ligand>
</feature>
<feature type="binding site" evidence="2">
    <location>
        <position position="220"/>
    </location>
    <ligand>
        <name>GTP</name>
        <dbReference type="ChEBI" id="CHEBI:37565"/>
    </ligand>
</feature>
<feature type="binding site" evidence="2">
    <location>
        <position position="221"/>
    </location>
    <ligand>
        <name>GTP</name>
        <dbReference type="ChEBI" id="CHEBI:37565"/>
    </ligand>
</feature>
<feature type="modified residue" description="N6-acetyllysine" evidence="3">
    <location>
        <position position="79"/>
    </location>
</feature>
<feature type="modified residue" description="N6-acetyllysine; alternate" evidence="3">
    <location>
        <position position="88"/>
    </location>
</feature>
<feature type="modified residue" description="N6-succinyllysine; alternate" evidence="8">
    <location>
        <position position="88"/>
    </location>
</feature>
<feature type="modified residue" description="N6-succinyllysine" evidence="8">
    <location>
        <position position="234"/>
    </location>
</feature>
<feature type="modified residue" description="N6-acetyllysine" evidence="7 8">
    <location>
        <position position="256"/>
    </location>
</feature>
<feature type="modified residue" description="Phosphothreonine" evidence="3">
    <location>
        <position position="278"/>
    </location>
</feature>
<feature type="modified residue" description="N6-succinyllysine" evidence="8">
    <location>
        <position position="286"/>
    </location>
</feature>
<feature type="modified residue" description="Phosphoserine" evidence="6">
    <location>
        <position position="312"/>
    </location>
</feature>
<feature type="modified residue" description="N6-acetyllysine" evidence="7">
    <location>
        <position position="361"/>
    </location>
</feature>
<feature type="modified residue" description="N6-acetyllysine" evidence="3">
    <location>
        <position position="418"/>
    </location>
</feature>
<feature type="splice variant" id="VSP_013942" description="In isoform 2." evidence="5">
    <original>YILSKEEGGRHKPFVSHFMPVMFSLTWDMACRVILPPGKELAMPGEDLKLSLILRQPMILEKGQRFTLRDGNKTIGTGLVTDVPAMTEEDKNIKWS</original>
    <variation>RAPVLSGFPCLEAGLVAKPFHPYCFSPLGLYPQQGGRWPPQTLCISFHARHVLPDLGHGLSSHLASREGTCHAWRGLEA</variation>
    <location>
        <begin position="357"/>
        <end position="452"/>
    </location>
</feature>
<dbReference type="EC" id="3.6.5.3" evidence="2"/>
<dbReference type="EMBL" id="AK075857">
    <property type="protein sequence ID" value="BAC36008.1"/>
    <property type="molecule type" value="mRNA"/>
</dbReference>
<dbReference type="EMBL" id="AK084724">
    <property type="protein sequence ID" value="BAC39263.1"/>
    <property type="molecule type" value="mRNA"/>
</dbReference>
<dbReference type="EMBL" id="AK153135">
    <property type="protein sequence ID" value="BAE31747.1"/>
    <property type="molecule type" value="mRNA"/>
</dbReference>
<dbReference type="EMBL" id="AK152858">
    <property type="protein sequence ID" value="BAE31551.1"/>
    <property type="molecule type" value="mRNA"/>
</dbReference>
<dbReference type="EMBL" id="BC060959">
    <property type="protein sequence ID" value="AAH60959.1"/>
    <property type="molecule type" value="mRNA"/>
</dbReference>
<dbReference type="EMBL" id="BC100596">
    <property type="protein sequence ID" value="AAI00597.1"/>
    <property type="molecule type" value="mRNA"/>
</dbReference>
<dbReference type="CCDS" id="CCDS21830.1">
    <molecule id="Q8BFR5-1"/>
</dbReference>
<dbReference type="CCDS" id="CCDS52398.1">
    <molecule id="Q8BFR5-2"/>
</dbReference>
<dbReference type="RefSeq" id="NP_001157185.1">
    <molecule id="Q8BFR5-2"/>
    <property type="nucleotide sequence ID" value="NM_001163713.1"/>
</dbReference>
<dbReference type="RefSeq" id="NP_766333.1">
    <molecule id="Q8BFR5-1"/>
    <property type="nucleotide sequence ID" value="NM_172745.3"/>
</dbReference>
<dbReference type="SMR" id="Q8BFR5"/>
<dbReference type="BioGRID" id="231459">
    <property type="interactions" value="37"/>
</dbReference>
<dbReference type="FunCoup" id="Q8BFR5">
    <property type="interactions" value="1955"/>
</dbReference>
<dbReference type="IntAct" id="Q8BFR5">
    <property type="interactions" value="13"/>
</dbReference>
<dbReference type="MINT" id="Q8BFR5"/>
<dbReference type="STRING" id="10090.ENSMUSP00000095656"/>
<dbReference type="GlyGen" id="Q8BFR5">
    <property type="glycosylation" value="2 sites, 1 N-linked glycan (1 site), 1 O-linked glycan (1 site)"/>
</dbReference>
<dbReference type="iPTMnet" id="Q8BFR5"/>
<dbReference type="PhosphoSitePlus" id="Q8BFR5"/>
<dbReference type="SwissPalm" id="Q8BFR5"/>
<dbReference type="REPRODUCTION-2DPAGE" id="Q6P919"/>
<dbReference type="REPRODUCTION-2DPAGE" id="Q8BFR5"/>
<dbReference type="jPOST" id="Q8BFR5"/>
<dbReference type="PaxDb" id="10090-ENSMUSP00000095656"/>
<dbReference type="PeptideAtlas" id="Q8BFR5"/>
<dbReference type="ProteomicsDB" id="277731">
    <molecule id="Q8BFR5-1"/>
</dbReference>
<dbReference type="ProteomicsDB" id="277732">
    <molecule id="Q8BFR5-2"/>
</dbReference>
<dbReference type="Pumba" id="Q8BFR5"/>
<dbReference type="Antibodypedia" id="13151">
    <property type="antibodies" value="340 antibodies from 30 providers"/>
</dbReference>
<dbReference type="Ensembl" id="ENSMUST00000098048.6">
    <molecule id="Q8BFR5-1"/>
    <property type="protein sequence ID" value="ENSMUSP00000095656.5"/>
    <property type="gene ID" value="ENSMUSG00000073838.11"/>
</dbReference>
<dbReference type="Ensembl" id="ENSMUST00000106392.10">
    <molecule id="Q8BFR5-2"/>
    <property type="protein sequence ID" value="ENSMUSP00000102000.4"/>
    <property type="gene ID" value="ENSMUSG00000073838.11"/>
</dbReference>
<dbReference type="GeneID" id="233870"/>
<dbReference type="KEGG" id="mmu:233870"/>
<dbReference type="UCSC" id="uc009jro.2">
    <molecule id="Q8BFR5-1"/>
    <property type="organism name" value="mouse"/>
</dbReference>
<dbReference type="UCSC" id="uc009jrq.2">
    <molecule id="Q8BFR5-2"/>
    <property type="organism name" value="mouse"/>
</dbReference>
<dbReference type="AGR" id="MGI:1923686"/>
<dbReference type="CTD" id="7284"/>
<dbReference type="MGI" id="MGI:1923686">
    <property type="gene designation" value="Tufm"/>
</dbReference>
<dbReference type="VEuPathDB" id="HostDB:ENSMUSG00000073838"/>
<dbReference type="eggNOG" id="KOG0460">
    <property type="taxonomic scope" value="Eukaryota"/>
</dbReference>
<dbReference type="GeneTree" id="ENSGT00940000156748"/>
<dbReference type="HOGENOM" id="CLU_007265_1_0_1"/>
<dbReference type="InParanoid" id="Q8BFR5"/>
<dbReference type="OMA" id="EGDKEWG"/>
<dbReference type="OrthoDB" id="2067at2759"/>
<dbReference type="PhylomeDB" id="Q8BFR5"/>
<dbReference type="TreeFam" id="TF300432"/>
<dbReference type="BioGRID-ORCS" id="233870">
    <property type="hits" value="25 hits in 78 CRISPR screens"/>
</dbReference>
<dbReference type="CD-CODE" id="CE726F99">
    <property type="entry name" value="Postsynaptic density"/>
</dbReference>
<dbReference type="ChiTaRS" id="Tufm">
    <property type="organism name" value="mouse"/>
</dbReference>
<dbReference type="PRO" id="PR:Q8BFR5"/>
<dbReference type="Proteomes" id="UP000000589">
    <property type="component" value="Chromosome 7"/>
</dbReference>
<dbReference type="RNAct" id="Q8BFR5">
    <property type="molecule type" value="protein"/>
</dbReference>
<dbReference type="Bgee" id="ENSMUSG00000073838">
    <property type="expression patterns" value="Expressed in right kidney and 71 other cell types or tissues"/>
</dbReference>
<dbReference type="ExpressionAtlas" id="Q8BFR5">
    <property type="expression patterns" value="baseline and differential"/>
</dbReference>
<dbReference type="GO" id="GO:0005743">
    <property type="term" value="C:mitochondrial inner membrane"/>
    <property type="evidence" value="ECO:0007005"/>
    <property type="project" value="MGI"/>
</dbReference>
<dbReference type="GO" id="GO:0042645">
    <property type="term" value="C:mitochondrial nucleoid"/>
    <property type="evidence" value="ECO:0007669"/>
    <property type="project" value="Ensembl"/>
</dbReference>
<dbReference type="GO" id="GO:0005739">
    <property type="term" value="C:mitochondrion"/>
    <property type="evidence" value="ECO:0007005"/>
    <property type="project" value="MGI"/>
</dbReference>
<dbReference type="GO" id="GO:0043209">
    <property type="term" value="C:myelin sheath"/>
    <property type="evidence" value="ECO:0007005"/>
    <property type="project" value="UniProtKB"/>
</dbReference>
<dbReference type="GO" id="GO:0005525">
    <property type="term" value="F:GTP binding"/>
    <property type="evidence" value="ECO:0000250"/>
    <property type="project" value="UniProtKB"/>
</dbReference>
<dbReference type="GO" id="GO:0003924">
    <property type="term" value="F:GTPase activity"/>
    <property type="evidence" value="ECO:0000250"/>
    <property type="project" value="UniProtKB"/>
</dbReference>
<dbReference type="GO" id="GO:0000287">
    <property type="term" value="F:magnesium ion binding"/>
    <property type="evidence" value="ECO:0000250"/>
    <property type="project" value="UniProtKB"/>
</dbReference>
<dbReference type="GO" id="GO:0003746">
    <property type="term" value="F:translation elongation factor activity"/>
    <property type="evidence" value="ECO:0000250"/>
    <property type="project" value="UniProtKB"/>
</dbReference>
<dbReference type="GO" id="GO:0006414">
    <property type="term" value="P:translational elongation"/>
    <property type="evidence" value="ECO:0000250"/>
    <property type="project" value="UniProtKB"/>
</dbReference>
<dbReference type="CDD" id="cd01884">
    <property type="entry name" value="EF_Tu"/>
    <property type="match status" value="1"/>
</dbReference>
<dbReference type="CDD" id="cd03697">
    <property type="entry name" value="EFTU_II"/>
    <property type="match status" value="1"/>
</dbReference>
<dbReference type="CDD" id="cd03706">
    <property type="entry name" value="mtEFTU_III"/>
    <property type="match status" value="1"/>
</dbReference>
<dbReference type="FunFam" id="2.40.30.10:FF:000068">
    <property type="entry name" value="Elongation factor Tu"/>
    <property type="match status" value="1"/>
</dbReference>
<dbReference type="FunFam" id="2.40.30.10:FF:000071">
    <property type="entry name" value="Elongation factor Tu"/>
    <property type="match status" value="1"/>
</dbReference>
<dbReference type="FunFam" id="3.40.50.300:FF:000003">
    <property type="entry name" value="Elongation factor Tu"/>
    <property type="match status" value="1"/>
</dbReference>
<dbReference type="Gene3D" id="3.40.50.300">
    <property type="entry name" value="P-loop containing nucleotide triphosphate hydrolases"/>
    <property type="match status" value="1"/>
</dbReference>
<dbReference type="Gene3D" id="2.40.30.10">
    <property type="entry name" value="Translation factors"/>
    <property type="match status" value="2"/>
</dbReference>
<dbReference type="InterPro" id="IPR041709">
    <property type="entry name" value="EF-Tu_GTP-bd"/>
</dbReference>
<dbReference type="InterPro" id="IPR050055">
    <property type="entry name" value="EF-Tu_GTPase"/>
</dbReference>
<dbReference type="InterPro" id="IPR004161">
    <property type="entry name" value="EFTu-like_2"/>
</dbReference>
<dbReference type="InterPro" id="IPR033720">
    <property type="entry name" value="EFTU_2"/>
</dbReference>
<dbReference type="InterPro" id="IPR031157">
    <property type="entry name" value="G_TR_CS"/>
</dbReference>
<dbReference type="InterPro" id="IPR027417">
    <property type="entry name" value="P-loop_NTPase"/>
</dbReference>
<dbReference type="InterPro" id="IPR000795">
    <property type="entry name" value="T_Tr_GTP-bd_dom"/>
</dbReference>
<dbReference type="InterPro" id="IPR009000">
    <property type="entry name" value="Transl_B-barrel_sf"/>
</dbReference>
<dbReference type="InterPro" id="IPR009001">
    <property type="entry name" value="Transl_elong_EF1A/Init_IF2_C"/>
</dbReference>
<dbReference type="InterPro" id="IPR004541">
    <property type="entry name" value="Transl_elong_EFTu/EF1A_bac/org"/>
</dbReference>
<dbReference type="InterPro" id="IPR004160">
    <property type="entry name" value="Transl_elong_EFTu/EF1A_C"/>
</dbReference>
<dbReference type="NCBIfam" id="TIGR00485">
    <property type="entry name" value="EF-Tu"/>
    <property type="match status" value="1"/>
</dbReference>
<dbReference type="NCBIfam" id="NF000766">
    <property type="entry name" value="PRK00049.1"/>
    <property type="match status" value="1"/>
</dbReference>
<dbReference type="NCBIfam" id="NF009372">
    <property type="entry name" value="PRK12735.1"/>
    <property type="match status" value="1"/>
</dbReference>
<dbReference type="NCBIfam" id="NF009373">
    <property type="entry name" value="PRK12736.1"/>
    <property type="match status" value="1"/>
</dbReference>
<dbReference type="PANTHER" id="PTHR43721:SF36">
    <property type="entry name" value="ELONGATION FACTOR TU, MITOCHONDRIAL"/>
    <property type="match status" value="1"/>
</dbReference>
<dbReference type="PANTHER" id="PTHR43721">
    <property type="entry name" value="ELONGATION FACTOR TU-RELATED"/>
    <property type="match status" value="1"/>
</dbReference>
<dbReference type="Pfam" id="PF00009">
    <property type="entry name" value="GTP_EFTU"/>
    <property type="match status" value="1"/>
</dbReference>
<dbReference type="Pfam" id="PF03144">
    <property type="entry name" value="GTP_EFTU_D2"/>
    <property type="match status" value="1"/>
</dbReference>
<dbReference type="Pfam" id="PF03143">
    <property type="entry name" value="GTP_EFTU_D3"/>
    <property type="match status" value="1"/>
</dbReference>
<dbReference type="PRINTS" id="PR00315">
    <property type="entry name" value="ELONGATNFCT"/>
</dbReference>
<dbReference type="SUPFAM" id="SSF50465">
    <property type="entry name" value="EF-Tu/eEF-1alpha/eIF2-gamma C-terminal domain"/>
    <property type="match status" value="1"/>
</dbReference>
<dbReference type="SUPFAM" id="SSF52540">
    <property type="entry name" value="P-loop containing nucleoside triphosphate hydrolases"/>
    <property type="match status" value="1"/>
</dbReference>
<dbReference type="SUPFAM" id="SSF50447">
    <property type="entry name" value="Translation proteins"/>
    <property type="match status" value="1"/>
</dbReference>
<dbReference type="PROSITE" id="PS00301">
    <property type="entry name" value="G_TR_1"/>
    <property type="match status" value="1"/>
</dbReference>
<dbReference type="PROSITE" id="PS51722">
    <property type="entry name" value="G_TR_2"/>
    <property type="match status" value="1"/>
</dbReference>
<keyword id="KW-0007">Acetylation</keyword>
<keyword id="KW-0025">Alternative splicing</keyword>
<keyword id="KW-0903">Direct protein sequencing</keyword>
<keyword id="KW-0251">Elongation factor</keyword>
<keyword id="KW-0342">GTP-binding</keyword>
<keyword id="KW-0378">Hydrolase</keyword>
<keyword id="KW-0460">Magnesium</keyword>
<keyword id="KW-0479">Metal-binding</keyword>
<keyword id="KW-0496">Mitochondrion</keyword>
<keyword id="KW-0547">Nucleotide-binding</keyword>
<keyword id="KW-0597">Phosphoprotein</keyword>
<keyword id="KW-0648">Protein biosynthesis</keyword>
<keyword id="KW-1185">Reference proteome</keyword>
<keyword id="KW-0809">Transit peptide</keyword>
<evidence type="ECO:0000250" key="1"/>
<evidence type="ECO:0000250" key="2">
    <source>
        <dbReference type="UniProtKB" id="P0CE47"/>
    </source>
</evidence>
<evidence type="ECO:0000250" key="3">
    <source>
        <dbReference type="UniProtKB" id="P49411"/>
    </source>
</evidence>
<evidence type="ECO:0000255" key="4">
    <source>
        <dbReference type="PROSITE-ProRule" id="PRU01059"/>
    </source>
</evidence>
<evidence type="ECO:0000303" key="5">
    <source>
    </source>
</evidence>
<evidence type="ECO:0007744" key="6">
    <source>
    </source>
</evidence>
<evidence type="ECO:0007744" key="7">
    <source>
    </source>
</evidence>
<evidence type="ECO:0007744" key="8">
    <source>
    </source>
</evidence>
<protein>
    <recommendedName>
        <fullName>Elongation factor Tu, mitochondrial</fullName>
        <ecNumber evidence="2">3.6.5.3</ecNumber>
    </recommendedName>
</protein>
<organism>
    <name type="scientific">Mus musculus</name>
    <name type="common">Mouse</name>
    <dbReference type="NCBI Taxonomy" id="10090"/>
    <lineage>
        <taxon>Eukaryota</taxon>
        <taxon>Metazoa</taxon>
        <taxon>Chordata</taxon>
        <taxon>Craniata</taxon>
        <taxon>Vertebrata</taxon>
        <taxon>Euteleostomi</taxon>
        <taxon>Mammalia</taxon>
        <taxon>Eutheria</taxon>
        <taxon>Euarchontoglires</taxon>
        <taxon>Glires</taxon>
        <taxon>Rodentia</taxon>
        <taxon>Myomorpha</taxon>
        <taxon>Muroidea</taxon>
        <taxon>Muridae</taxon>
        <taxon>Murinae</taxon>
        <taxon>Mus</taxon>
        <taxon>Mus</taxon>
    </lineage>
</organism>
<gene>
    <name type="primary">Tufm</name>
</gene>
<name>EFTU_MOUSE</name>
<reference key="1">
    <citation type="journal article" date="2005" name="Science">
        <title>The transcriptional landscape of the mammalian genome.</title>
        <authorList>
            <person name="Carninci P."/>
            <person name="Kasukawa T."/>
            <person name="Katayama S."/>
            <person name="Gough J."/>
            <person name="Frith M.C."/>
            <person name="Maeda N."/>
            <person name="Oyama R."/>
            <person name="Ravasi T."/>
            <person name="Lenhard B."/>
            <person name="Wells C."/>
            <person name="Kodzius R."/>
            <person name="Shimokawa K."/>
            <person name="Bajic V.B."/>
            <person name="Brenner S.E."/>
            <person name="Batalov S."/>
            <person name="Forrest A.R."/>
            <person name="Zavolan M."/>
            <person name="Davis M.J."/>
            <person name="Wilming L.G."/>
            <person name="Aidinis V."/>
            <person name="Allen J.E."/>
            <person name="Ambesi-Impiombato A."/>
            <person name="Apweiler R."/>
            <person name="Aturaliya R.N."/>
            <person name="Bailey T.L."/>
            <person name="Bansal M."/>
            <person name="Baxter L."/>
            <person name="Beisel K.W."/>
            <person name="Bersano T."/>
            <person name="Bono H."/>
            <person name="Chalk A.M."/>
            <person name="Chiu K.P."/>
            <person name="Choudhary V."/>
            <person name="Christoffels A."/>
            <person name="Clutterbuck D.R."/>
            <person name="Crowe M.L."/>
            <person name="Dalla E."/>
            <person name="Dalrymple B.P."/>
            <person name="de Bono B."/>
            <person name="Della Gatta G."/>
            <person name="di Bernardo D."/>
            <person name="Down T."/>
            <person name="Engstrom P."/>
            <person name="Fagiolini M."/>
            <person name="Faulkner G."/>
            <person name="Fletcher C.F."/>
            <person name="Fukushima T."/>
            <person name="Furuno M."/>
            <person name="Futaki S."/>
            <person name="Gariboldi M."/>
            <person name="Georgii-Hemming P."/>
            <person name="Gingeras T.R."/>
            <person name="Gojobori T."/>
            <person name="Green R.E."/>
            <person name="Gustincich S."/>
            <person name="Harbers M."/>
            <person name="Hayashi Y."/>
            <person name="Hensch T.K."/>
            <person name="Hirokawa N."/>
            <person name="Hill D."/>
            <person name="Huminiecki L."/>
            <person name="Iacono M."/>
            <person name="Ikeo K."/>
            <person name="Iwama A."/>
            <person name="Ishikawa T."/>
            <person name="Jakt M."/>
            <person name="Kanapin A."/>
            <person name="Katoh M."/>
            <person name="Kawasawa Y."/>
            <person name="Kelso J."/>
            <person name="Kitamura H."/>
            <person name="Kitano H."/>
            <person name="Kollias G."/>
            <person name="Krishnan S.P."/>
            <person name="Kruger A."/>
            <person name="Kummerfeld S.K."/>
            <person name="Kurochkin I.V."/>
            <person name="Lareau L.F."/>
            <person name="Lazarevic D."/>
            <person name="Lipovich L."/>
            <person name="Liu J."/>
            <person name="Liuni S."/>
            <person name="McWilliam S."/>
            <person name="Madan Babu M."/>
            <person name="Madera M."/>
            <person name="Marchionni L."/>
            <person name="Matsuda H."/>
            <person name="Matsuzawa S."/>
            <person name="Miki H."/>
            <person name="Mignone F."/>
            <person name="Miyake S."/>
            <person name="Morris K."/>
            <person name="Mottagui-Tabar S."/>
            <person name="Mulder N."/>
            <person name="Nakano N."/>
            <person name="Nakauchi H."/>
            <person name="Ng P."/>
            <person name="Nilsson R."/>
            <person name="Nishiguchi S."/>
            <person name="Nishikawa S."/>
            <person name="Nori F."/>
            <person name="Ohara O."/>
            <person name="Okazaki Y."/>
            <person name="Orlando V."/>
            <person name="Pang K.C."/>
            <person name="Pavan W.J."/>
            <person name="Pavesi G."/>
            <person name="Pesole G."/>
            <person name="Petrovsky N."/>
            <person name="Piazza S."/>
            <person name="Reed J."/>
            <person name="Reid J.F."/>
            <person name="Ring B.Z."/>
            <person name="Ringwald M."/>
            <person name="Rost B."/>
            <person name="Ruan Y."/>
            <person name="Salzberg S.L."/>
            <person name="Sandelin A."/>
            <person name="Schneider C."/>
            <person name="Schoenbach C."/>
            <person name="Sekiguchi K."/>
            <person name="Semple C.A."/>
            <person name="Seno S."/>
            <person name="Sessa L."/>
            <person name="Sheng Y."/>
            <person name="Shibata Y."/>
            <person name="Shimada H."/>
            <person name="Shimada K."/>
            <person name="Silva D."/>
            <person name="Sinclair B."/>
            <person name="Sperling S."/>
            <person name="Stupka E."/>
            <person name="Sugiura K."/>
            <person name="Sultana R."/>
            <person name="Takenaka Y."/>
            <person name="Taki K."/>
            <person name="Tammoja K."/>
            <person name="Tan S.L."/>
            <person name="Tang S."/>
            <person name="Taylor M.S."/>
            <person name="Tegner J."/>
            <person name="Teichmann S.A."/>
            <person name="Ueda H.R."/>
            <person name="van Nimwegen E."/>
            <person name="Verardo R."/>
            <person name="Wei C.L."/>
            <person name="Yagi K."/>
            <person name="Yamanishi H."/>
            <person name="Zabarovsky E."/>
            <person name="Zhu S."/>
            <person name="Zimmer A."/>
            <person name="Hide W."/>
            <person name="Bult C."/>
            <person name="Grimmond S.M."/>
            <person name="Teasdale R.D."/>
            <person name="Liu E.T."/>
            <person name="Brusic V."/>
            <person name="Quackenbush J."/>
            <person name="Wahlestedt C."/>
            <person name="Mattick J.S."/>
            <person name="Hume D.A."/>
            <person name="Kai C."/>
            <person name="Sasaki D."/>
            <person name="Tomaru Y."/>
            <person name="Fukuda S."/>
            <person name="Kanamori-Katayama M."/>
            <person name="Suzuki M."/>
            <person name="Aoki J."/>
            <person name="Arakawa T."/>
            <person name="Iida J."/>
            <person name="Imamura K."/>
            <person name="Itoh M."/>
            <person name="Kato T."/>
            <person name="Kawaji H."/>
            <person name="Kawagashira N."/>
            <person name="Kawashima T."/>
            <person name="Kojima M."/>
            <person name="Kondo S."/>
            <person name="Konno H."/>
            <person name="Nakano K."/>
            <person name="Ninomiya N."/>
            <person name="Nishio T."/>
            <person name="Okada M."/>
            <person name="Plessy C."/>
            <person name="Shibata K."/>
            <person name="Shiraki T."/>
            <person name="Suzuki S."/>
            <person name="Tagami M."/>
            <person name="Waki K."/>
            <person name="Watahiki A."/>
            <person name="Okamura-Oho Y."/>
            <person name="Suzuki H."/>
            <person name="Kawai J."/>
            <person name="Hayashizaki Y."/>
        </authorList>
    </citation>
    <scope>NUCLEOTIDE SEQUENCE [LARGE SCALE MRNA] (ISOFORM 1)</scope>
    <source>
        <strain>C57BL/6J</strain>
        <tissue>Bone marrow</tissue>
        <tissue>Heart</tissue>
        <tissue>Tongue</tissue>
    </source>
</reference>
<reference key="2">
    <citation type="journal article" date="2004" name="Genome Res.">
        <title>The status, quality, and expansion of the NIH full-length cDNA project: the Mammalian Gene Collection (MGC).</title>
        <authorList>
            <consortium name="The MGC Project Team"/>
        </authorList>
    </citation>
    <scope>NUCLEOTIDE SEQUENCE [LARGE SCALE MRNA] (ISOFORMS 1 AND 2)</scope>
    <source>
        <tissue>Kidney</tissue>
    </source>
</reference>
<reference key="3">
    <citation type="submission" date="2007-04" db="UniProtKB">
        <authorList>
            <person name="Lubec G."/>
            <person name="Klug S."/>
            <person name="Kang S.U."/>
        </authorList>
    </citation>
    <scope>PROTEIN SEQUENCE OF 91-102; 105-120; 210-227; 239-271; 316-327 AND 352-361</scope>
    <scope>IDENTIFICATION BY MASS SPECTROMETRY</scope>
    <source>
        <strain>C57BL/6J</strain>
        <tissue>Brain</tissue>
        <tissue>Hippocampus</tissue>
    </source>
</reference>
<reference key="4">
    <citation type="journal article" date="2010" name="Cell">
        <title>A tissue-specific atlas of mouse protein phosphorylation and expression.</title>
        <authorList>
            <person name="Huttlin E.L."/>
            <person name="Jedrychowski M.P."/>
            <person name="Elias J.E."/>
            <person name="Goswami T."/>
            <person name="Rad R."/>
            <person name="Beausoleil S.A."/>
            <person name="Villen J."/>
            <person name="Haas W."/>
            <person name="Sowa M.E."/>
            <person name="Gygi S.P."/>
        </authorList>
    </citation>
    <scope>PHOSPHORYLATION [LARGE SCALE ANALYSIS] AT SER-312</scope>
    <scope>IDENTIFICATION BY MASS SPECTROMETRY [LARGE SCALE ANALYSIS]</scope>
    <source>
        <tissue>Brain</tissue>
        <tissue>Brown adipose tissue</tissue>
        <tissue>Heart</tissue>
        <tissue>Kidney</tissue>
        <tissue>Liver</tissue>
        <tissue>Lung</tissue>
        <tissue>Pancreas</tissue>
        <tissue>Spleen</tissue>
        <tissue>Testis</tissue>
    </source>
</reference>
<reference key="5">
    <citation type="journal article" date="2013" name="Mol. Cell">
        <title>SIRT5-mediated lysine desuccinylation impacts diverse metabolic pathways.</title>
        <authorList>
            <person name="Park J."/>
            <person name="Chen Y."/>
            <person name="Tishkoff D.X."/>
            <person name="Peng C."/>
            <person name="Tan M."/>
            <person name="Dai L."/>
            <person name="Xie Z."/>
            <person name="Zhang Y."/>
            <person name="Zwaans B.M."/>
            <person name="Skinner M.E."/>
            <person name="Lombard D.B."/>
            <person name="Zhao Y."/>
        </authorList>
    </citation>
    <scope>ACETYLATION [LARGE SCALE ANALYSIS] AT LYS-256</scope>
    <scope>SUCCINYLATION [LARGE SCALE ANALYSIS] AT LYS-88; LYS-234 AND LYS-286</scope>
    <scope>IDENTIFICATION BY MASS SPECTROMETRY [LARGE SCALE ANALYSIS]</scope>
    <source>
        <tissue>Embryonic fibroblast</tissue>
        <tissue>Liver</tissue>
    </source>
</reference>
<reference key="6">
    <citation type="journal article" date="2013" name="Proc. Natl. Acad. Sci. U.S.A.">
        <title>Label-free quantitative proteomics of the lysine acetylome in mitochondria identifies substrates of SIRT3 in metabolic pathways.</title>
        <authorList>
            <person name="Rardin M.J."/>
            <person name="Newman J.C."/>
            <person name="Held J.M."/>
            <person name="Cusack M.P."/>
            <person name="Sorensen D.J."/>
            <person name="Li B."/>
            <person name="Schilling B."/>
            <person name="Mooney S.D."/>
            <person name="Kahn C.R."/>
            <person name="Verdin E."/>
            <person name="Gibson B.W."/>
        </authorList>
    </citation>
    <scope>ACETYLATION [LARGE SCALE ANALYSIS] AT LYS-256 AND LYS-361</scope>
    <scope>IDENTIFICATION BY MASS SPECTROMETRY [LARGE SCALE ANALYSIS]</scope>
    <source>
        <tissue>Liver</tissue>
    </source>
</reference>
<sequence>MAAATLLRATPRFSGLCASPTPFLQGRLRPLKAPASPFLCRGLAVEAKKTYVRDKPHVNVGTIGHVDHGKTTLTAAITKILAEGGGAKFKKYEEIDNAPEERARGITINAAHVEYSTAARHYAHTDCPGHADYVKNMITGTAPLDGCILVVAANDGPMPQTREHLLLAKQIGVEHVVVYVNKADAVQDSEMVELVELEIRELLTEFGYKGEETPVIVGSALCALEQRDPELGVKSVQKLLDAVDTYIPVPTRDLDKPFLLPVESVYSIPGRGTVVTGTLERGILKKGDECELLGHNKNIRTVVTGIEMFHKSLERAEAGDNLGALVRGLKREDLRRGLVMVKPGSIQPHQKVEAQVYILSKEEGGRHKPFVSHFMPVMFSLTWDMACRVILPPGKELAMPGEDLKLSLILRQPMILEKGQRFTLRDGNKTIGTGLVTDVPAMTEEDKNIKWS</sequence>
<comment type="function">
    <text evidence="3">GTP hydrolase that promotes the GTP-dependent binding of aminoacyl-tRNA to the A-site of ribosomes during protein biosynthesis. Also plays a role in the regulation of autophagy and innate immunity. Recruits ATG5-ATG12 and NLRX1 at mitochondria and serves as a checkpoint of the RIGI-MAVS pathway. In turn, inhibits RLR-mediated type I interferon while promoting autophagy.</text>
</comment>
<comment type="catalytic activity">
    <reaction evidence="2">
        <text>GTP + H2O = GDP + phosphate + H(+)</text>
        <dbReference type="Rhea" id="RHEA:19669"/>
        <dbReference type="ChEBI" id="CHEBI:15377"/>
        <dbReference type="ChEBI" id="CHEBI:15378"/>
        <dbReference type="ChEBI" id="CHEBI:37565"/>
        <dbReference type="ChEBI" id="CHEBI:43474"/>
        <dbReference type="ChEBI" id="CHEBI:58189"/>
        <dbReference type="EC" id="3.6.5.3"/>
    </reaction>
    <physiologicalReaction direction="left-to-right" evidence="2">
        <dbReference type="Rhea" id="RHEA:19670"/>
    </physiologicalReaction>
</comment>
<comment type="subunit">
    <text evidence="3">Interacts with NLRX1. Interacts with ATG16L1.</text>
</comment>
<comment type="subcellular location">
    <subcellularLocation>
        <location evidence="3">Mitochondrion</location>
    </subcellularLocation>
</comment>
<comment type="alternative products">
    <event type="alternative splicing"/>
    <isoform>
        <id>Q8BFR5-1</id>
        <name>1</name>
        <sequence type="displayed"/>
    </isoform>
    <isoform>
        <id>Q8BFR5-2</id>
        <name>2</name>
        <sequence type="described" ref="VSP_013942"/>
    </isoform>
</comment>
<comment type="similarity">
    <text evidence="4">Belongs to the TRAFAC class translation factor GTPase superfamily. Classic translation factor GTPase family. EF-Tu/EF-1A subfamily.</text>
</comment>
<proteinExistence type="evidence at protein level"/>
<accession>Q8BFR5</accession>
<accession>Q497E7</accession>
<accession>Q6P919</accession>